<accession>Q029R3</accession>
<protein>
    <recommendedName>
        <fullName evidence="1">Large ribosomal subunit protein bL20</fullName>
    </recommendedName>
    <alternativeName>
        <fullName evidence="2">50S ribosomal protein L20</fullName>
    </alternativeName>
</protein>
<gene>
    <name evidence="1" type="primary">rplT</name>
    <name type="ordered locus">Acid_1219</name>
</gene>
<evidence type="ECO:0000255" key="1">
    <source>
        <dbReference type="HAMAP-Rule" id="MF_00382"/>
    </source>
</evidence>
<evidence type="ECO:0000305" key="2"/>
<comment type="function">
    <text evidence="1">Binds directly to 23S ribosomal RNA and is necessary for the in vitro assembly process of the 50S ribosomal subunit. It is not involved in the protein synthesizing functions of that subunit.</text>
</comment>
<comment type="similarity">
    <text evidence="1">Belongs to the bacterial ribosomal protein bL20 family.</text>
</comment>
<feature type="chain" id="PRO_1000049077" description="Large ribosomal subunit protein bL20">
    <location>
        <begin position="1"/>
        <end position="130"/>
    </location>
</feature>
<keyword id="KW-0687">Ribonucleoprotein</keyword>
<keyword id="KW-0689">Ribosomal protein</keyword>
<keyword id="KW-0694">RNA-binding</keyword>
<keyword id="KW-0699">rRNA-binding</keyword>
<organism>
    <name type="scientific">Solibacter usitatus (strain Ellin6076)</name>
    <dbReference type="NCBI Taxonomy" id="234267"/>
    <lineage>
        <taxon>Bacteria</taxon>
        <taxon>Pseudomonadati</taxon>
        <taxon>Acidobacteriota</taxon>
        <taxon>Terriglobia</taxon>
        <taxon>Bryobacterales</taxon>
        <taxon>Solibacteraceae</taxon>
        <taxon>Candidatus Solibacter</taxon>
    </lineage>
</organism>
<dbReference type="EMBL" id="CP000473">
    <property type="protein sequence ID" value="ABJ82213.1"/>
    <property type="molecule type" value="Genomic_DNA"/>
</dbReference>
<dbReference type="SMR" id="Q029R3"/>
<dbReference type="FunCoup" id="Q029R3">
    <property type="interactions" value="635"/>
</dbReference>
<dbReference type="STRING" id="234267.Acid_1219"/>
<dbReference type="KEGG" id="sus:Acid_1219"/>
<dbReference type="eggNOG" id="COG0292">
    <property type="taxonomic scope" value="Bacteria"/>
</dbReference>
<dbReference type="HOGENOM" id="CLU_123265_0_1_0"/>
<dbReference type="InParanoid" id="Q029R3"/>
<dbReference type="OrthoDB" id="9808966at2"/>
<dbReference type="GO" id="GO:1990904">
    <property type="term" value="C:ribonucleoprotein complex"/>
    <property type="evidence" value="ECO:0007669"/>
    <property type="project" value="UniProtKB-KW"/>
</dbReference>
<dbReference type="GO" id="GO:0005840">
    <property type="term" value="C:ribosome"/>
    <property type="evidence" value="ECO:0007669"/>
    <property type="project" value="UniProtKB-KW"/>
</dbReference>
<dbReference type="GO" id="GO:0019843">
    <property type="term" value="F:rRNA binding"/>
    <property type="evidence" value="ECO:0007669"/>
    <property type="project" value="UniProtKB-UniRule"/>
</dbReference>
<dbReference type="GO" id="GO:0003735">
    <property type="term" value="F:structural constituent of ribosome"/>
    <property type="evidence" value="ECO:0007669"/>
    <property type="project" value="InterPro"/>
</dbReference>
<dbReference type="GO" id="GO:0000027">
    <property type="term" value="P:ribosomal large subunit assembly"/>
    <property type="evidence" value="ECO:0007669"/>
    <property type="project" value="UniProtKB-UniRule"/>
</dbReference>
<dbReference type="GO" id="GO:0006412">
    <property type="term" value="P:translation"/>
    <property type="evidence" value="ECO:0007669"/>
    <property type="project" value="InterPro"/>
</dbReference>
<dbReference type="CDD" id="cd07026">
    <property type="entry name" value="Ribosomal_L20"/>
    <property type="match status" value="1"/>
</dbReference>
<dbReference type="FunFam" id="1.10.1900.20:FF:000001">
    <property type="entry name" value="50S ribosomal protein L20"/>
    <property type="match status" value="1"/>
</dbReference>
<dbReference type="Gene3D" id="6.10.160.10">
    <property type="match status" value="1"/>
</dbReference>
<dbReference type="Gene3D" id="1.10.1900.20">
    <property type="entry name" value="Ribosomal protein L20"/>
    <property type="match status" value="1"/>
</dbReference>
<dbReference type="HAMAP" id="MF_00382">
    <property type="entry name" value="Ribosomal_bL20"/>
    <property type="match status" value="1"/>
</dbReference>
<dbReference type="InterPro" id="IPR005813">
    <property type="entry name" value="Ribosomal_bL20"/>
</dbReference>
<dbReference type="InterPro" id="IPR049946">
    <property type="entry name" value="RIBOSOMAL_L20_CS"/>
</dbReference>
<dbReference type="InterPro" id="IPR035566">
    <property type="entry name" value="Ribosomal_protein_bL20_C"/>
</dbReference>
<dbReference type="NCBIfam" id="TIGR01032">
    <property type="entry name" value="rplT_bact"/>
    <property type="match status" value="1"/>
</dbReference>
<dbReference type="PANTHER" id="PTHR10986">
    <property type="entry name" value="39S RIBOSOMAL PROTEIN L20"/>
    <property type="match status" value="1"/>
</dbReference>
<dbReference type="Pfam" id="PF00453">
    <property type="entry name" value="Ribosomal_L20"/>
    <property type="match status" value="1"/>
</dbReference>
<dbReference type="PRINTS" id="PR00062">
    <property type="entry name" value="RIBOSOMALL20"/>
</dbReference>
<dbReference type="SUPFAM" id="SSF74731">
    <property type="entry name" value="Ribosomal protein L20"/>
    <property type="match status" value="1"/>
</dbReference>
<dbReference type="PROSITE" id="PS00937">
    <property type="entry name" value="RIBOSOMAL_L20"/>
    <property type="match status" value="1"/>
</dbReference>
<sequence length="130" mass="14686">MPRVKRGTHRRASRKKVLARASGYFLTKSKLYRAAMEAVDRGLKFAYVGRKRKKRDYRRLWIVRINASCRAAGLSYSKFVHGLKAAGLDLNRKVLADVALHDDAAFRNLAELAKSALAVKESARLALEKE</sequence>
<name>RL20_SOLUE</name>
<proteinExistence type="inferred from homology"/>
<reference key="1">
    <citation type="journal article" date="2009" name="Appl. Environ. Microbiol.">
        <title>Three genomes from the phylum Acidobacteria provide insight into the lifestyles of these microorganisms in soils.</title>
        <authorList>
            <person name="Ward N.L."/>
            <person name="Challacombe J.F."/>
            <person name="Janssen P.H."/>
            <person name="Henrissat B."/>
            <person name="Coutinho P.M."/>
            <person name="Wu M."/>
            <person name="Xie G."/>
            <person name="Haft D.H."/>
            <person name="Sait M."/>
            <person name="Badger J."/>
            <person name="Barabote R.D."/>
            <person name="Bradley B."/>
            <person name="Brettin T.S."/>
            <person name="Brinkac L.M."/>
            <person name="Bruce D."/>
            <person name="Creasy T."/>
            <person name="Daugherty S.C."/>
            <person name="Davidsen T.M."/>
            <person name="DeBoy R.T."/>
            <person name="Detter J.C."/>
            <person name="Dodson R.J."/>
            <person name="Durkin A.S."/>
            <person name="Ganapathy A."/>
            <person name="Gwinn-Giglio M."/>
            <person name="Han C.S."/>
            <person name="Khouri H."/>
            <person name="Kiss H."/>
            <person name="Kothari S.P."/>
            <person name="Madupu R."/>
            <person name="Nelson K.E."/>
            <person name="Nelson W.C."/>
            <person name="Paulsen I."/>
            <person name="Penn K."/>
            <person name="Ren Q."/>
            <person name="Rosovitz M.J."/>
            <person name="Selengut J.D."/>
            <person name="Shrivastava S."/>
            <person name="Sullivan S.A."/>
            <person name="Tapia R."/>
            <person name="Thompson L.S."/>
            <person name="Watkins K.L."/>
            <person name="Yang Q."/>
            <person name="Yu C."/>
            <person name="Zafar N."/>
            <person name="Zhou L."/>
            <person name="Kuske C.R."/>
        </authorList>
    </citation>
    <scope>NUCLEOTIDE SEQUENCE [LARGE SCALE GENOMIC DNA]</scope>
    <source>
        <strain>Ellin6076</strain>
    </source>
</reference>